<accession>O31540</accession>
<dbReference type="EMBL" id="AL009126">
    <property type="protein sequence ID" value="CAB12540.1"/>
    <property type="molecule type" value="Genomic_DNA"/>
</dbReference>
<dbReference type="PIR" id="H69798">
    <property type="entry name" value="H69798"/>
</dbReference>
<dbReference type="RefSeq" id="NP_388602.1">
    <property type="nucleotide sequence ID" value="NC_000964.3"/>
</dbReference>
<dbReference type="RefSeq" id="WP_003243771.1">
    <property type="nucleotide sequence ID" value="NZ_OZ025638.1"/>
</dbReference>
<dbReference type="SMR" id="O31540"/>
<dbReference type="FunCoup" id="O31540">
    <property type="interactions" value="180"/>
</dbReference>
<dbReference type="STRING" id="224308.BSU07210"/>
<dbReference type="TCDB" id="2.A.7.3.35">
    <property type="family name" value="the drug/metabolite transporter (dmt) superfamily"/>
</dbReference>
<dbReference type="PaxDb" id="224308-BSU07210"/>
<dbReference type="EnsemblBacteria" id="CAB12540">
    <property type="protein sequence ID" value="CAB12540"/>
    <property type="gene ID" value="BSU_07210"/>
</dbReference>
<dbReference type="GeneID" id="936091"/>
<dbReference type="KEGG" id="bsu:BSU07210"/>
<dbReference type="PATRIC" id="fig|224308.179.peg.782"/>
<dbReference type="eggNOG" id="COG0697">
    <property type="taxonomic scope" value="Bacteria"/>
</dbReference>
<dbReference type="InParanoid" id="O31540"/>
<dbReference type="OrthoDB" id="9799821at2"/>
<dbReference type="PhylomeDB" id="O31540"/>
<dbReference type="BioCyc" id="BSUB:BSU07210-MONOMER"/>
<dbReference type="Proteomes" id="UP000001570">
    <property type="component" value="Chromosome"/>
</dbReference>
<dbReference type="GO" id="GO:0005886">
    <property type="term" value="C:plasma membrane"/>
    <property type="evidence" value="ECO:0007669"/>
    <property type="project" value="UniProtKB-SubCell"/>
</dbReference>
<dbReference type="InterPro" id="IPR051258">
    <property type="entry name" value="Diverse_Substrate_Transporter"/>
</dbReference>
<dbReference type="InterPro" id="IPR000620">
    <property type="entry name" value="EamA_dom"/>
</dbReference>
<dbReference type="PANTHER" id="PTHR42920:SF15">
    <property type="entry name" value="MEMBRANE PROTEIN"/>
    <property type="match status" value="1"/>
</dbReference>
<dbReference type="PANTHER" id="PTHR42920">
    <property type="entry name" value="OS03G0707200 PROTEIN-RELATED"/>
    <property type="match status" value="1"/>
</dbReference>
<dbReference type="Pfam" id="PF00892">
    <property type="entry name" value="EamA"/>
    <property type="match status" value="2"/>
</dbReference>
<dbReference type="SUPFAM" id="SSF103481">
    <property type="entry name" value="Multidrug resistance efflux transporter EmrE"/>
    <property type="match status" value="2"/>
</dbReference>
<protein>
    <recommendedName>
        <fullName>Uncharacterized transporter YetK</fullName>
    </recommendedName>
</protein>
<reference key="1">
    <citation type="journal article" date="1997" name="Nature">
        <title>The complete genome sequence of the Gram-positive bacterium Bacillus subtilis.</title>
        <authorList>
            <person name="Kunst F."/>
            <person name="Ogasawara N."/>
            <person name="Moszer I."/>
            <person name="Albertini A.M."/>
            <person name="Alloni G."/>
            <person name="Azevedo V."/>
            <person name="Bertero M.G."/>
            <person name="Bessieres P."/>
            <person name="Bolotin A."/>
            <person name="Borchert S."/>
            <person name="Borriss R."/>
            <person name="Boursier L."/>
            <person name="Brans A."/>
            <person name="Braun M."/>
            <person name="Brignell S.C."/>
            <person name="Bron S."/>
            <person name="Brouillet S."/>
            <person name="Bruschi C.V."/>
            <person name="Caldwell B."/>
            <person name="Capuano V."/>
            <person name="Carter N.M."/>
            <person name="Choi S.-K."/>
            <person name="Codani J.-J."/>
            <person name="Connerton I.F."/>
            <person name="Cummings N.J."/>
            <person name="Daniel R.A."/>
            <person name="Denizot F."/>
            <person name="Devine K.M."/>
            <person name="Duesterhoeft A."/>
            <person name="Ehrlich S.D."/>
            <person name="Emmerson P.T."/>
            <person name="Entian K.-D."/>
            <person name="Errington J."/>
            <person name="Fabret C."/>
            <person name="Ferrari E."/>
            <person name="Foulger D."/>
            <person name="Fritz C."/>
            <person name="Fujita M."/>
            <person name="Fujita Y."/>
            <person name="Fuma S."/>
            <person name="Galizzi A."/>
            <person name="Galleron N."/>
            <person name="Ghim S.-Y."/>
            <person name="Glaser P."/>
            <person name="Goffeau A."/>
            <person name="Golightly E.J."/>
            <person name="Grandi G."/>
            <person name="Guiseppi G."/>
            <person name="Guy B.J."/>
            <person name="Haga K."/>
            <person name="Haiech J."/>
            <person name="Harwood C.R."/>
            <person name="Henaut A."/>
            <person name="Hilbert H."/>
            <person name="Holsappel S."/>
            <person name="Hosono S."/>
            <person name="Hullo M.-F."/>
            <person name="Itaya M."/>
            <person name="Jones L.-M."/>
            <person name="Joris B."/>
            <person name="Karamata D."/>
            <person name="Kasahara Y."/>
            <person name="Klaerr-Blanchard M."/>
            <person name="Klein C."/>
            <person name="Kobayashi Y."/>
            <person name="Koetter P."/>
            <person name="Koningstein G."/>
            <person name="Krogh S."/>
            <person name="Kumano M."/>
            <person name="Kurita K."/>
            <person name="Lapidus A."/>
            <person name="Lardinois S."/>
            <person name="Lauber J."/>
            <person name="Lazarevic V."/>
            <person name="Lee S.-M."/>
            <person name="Levine A."/>
            <person name="Liu H."/>
            <person name="Masuda S."/>
            <person name="Mauel C."/>
            <person name="Medigue C."/>
            <person name="Medina N."/>
            <person name="Mellado R.P."/>
            <person name="Mizuno M."/>
            <person name="Moestl D."/>
            <person name="Nakai S."/>
            <person name="Noback M."/>
            <person name="Noone D."/>
            <person name="O'Reilly M."/>
            <person name="Ogawa K."/>
            <person name="Ogiwara A."/>
            <person name="Oudega B."/>
            <person name="Park S.-H."/>
            <person name="Parro V."/>
            <person name="Pohl T.M."/>
            <person name="Portetelle D."/>
            <person name="Porwollik S."/>
            <person name="Prescott A.M."/>
            <person name="Presecan E."/>
            <person name="Pujic P."/>
            <person name="Purnelle B."/>
            <person name="Rapoport G."/>
            <person name="Rey M."/>
            <person name="Reynolds S."/>
            <person name="Rieger M."/>
            <person name="Rivolta C."/>
            <person name="Rocha E."/>
            <person name="Roche B."/>
            <person name="Rose M."/>
            <person name="Sadaie Y."/>
            <person name="Sato T."/>
            <person name="Scanlan E."/>
            <person name="Schleich S."/>
            <person name="Schroeter R."/>
            <person name="Scoffone F."/>
            <person name="Sekiguchi J."/>
            <person name="Sekowska A."/>
            <person name="Seror S.J."/>
            <person name="Serror P."/>
            <person name="Shin B.-S."/>
            <person name="Soldo B."/>
            <person name="Sorokin A."/>
            <person name="Tacconi E."/>
            <person name="Takagi T."/>
            <person name="Takahashi H."/>
            <person name="Takemaru K."/>
            <person name="Takeuchi M."/>
            <person name="Tamakoshi A."/>
            <person name="Tanaka T."/>
            <person name="Terpstra P."/>
            <person name="Tognoni A."/>
            <person name="Tosato V."/>
            <person name="Uchiyama S."/>
            <person name="Vandenbol M."/>
            <person name="Vannier F."/>
            <person name="Vassarotti A."/>
            <person name="Viari A."/>
            <person name="Wambutt R."/>
            <person name="Wedler E."/>
            <person name="Wedler H."/>
            <person name="Weitzenegger T."/>
            <person name="Winters P."/>
            <person name="Wipat A."/>
            <person name="Yamamoto H."/>
            <person name="Yamane K."/>
            <person name="Yasumoto K."/>
            <person name="Yata K."/>
            <person name="Yoshida K."/>
            <person name="Yoshikawa H.-F."/>
            <person name="Zumstein E."/>
            <person name="Yoshikawa H."/>
            <person name="Danchin A."/>
        </authorList>
    </citation>
    <scope>NUCLEOTIDE SEQUENCE [LARGE SCALE GENOMIC DNA]</scope>
    <source>
        <strain>168</strain>
    </source>
</reference>
<keyword id="KW-1003">Cell membrane</keyword>
<keyword id="KW-0472">Membrane</keyword>
<keyword id="KW-1185">Reference proteome</keyword>
<keyword id="KW-0677">Repeat</keyword>
<keyword id="KW-0812">Transmembrane</keyword>
<keyword id="KW-1133">Transmembrane helix</keyword>
<keyword id="KW-0813">Transport</keyword>
<gene>
    <name type="primary">yetK</name>
    <name type="ordered locus">BSU07210</name>
</gene>
<evidence type="ECO:0000255" key="1"/>
<evidence type="ECO:0000305" key="2"/>
<comment type="subcellular location">
    <subcellularLocation>
        <location evidence="2">Cell membrane</location>
        <topology evidence="2">Multi-pass membrane protein</topology>
    </subcellularLocation>
</comment>
<comment type="similarity">
    <text evidence="2">Belongs to the EamA transporter family.</text>
</comment>
<organism>
    <name type="scientific">Bacillus subtilis (strain 168)</name>
    <dbReference type="NCBI Taxonomy" id="224308"/>
    <lineage>
        <taxon>Bacteria</taxon>
        <taxon>Bacillati</taxon>
        <taxon>Bacillota</taxon>
        <taxon>Bacilli</taxon>
        <taxon>Bacillales</taxon>
        <taxon>Bacillaceae</taxon>
        <taxon>Bacillus</taxon>
    </lineage>
</organism>
<feature type="chain" id="PRO_0000108182" description="Uncharacterized transporter YetK">
    <location>
        <begin position="1"/>
        <end position="330"/>
    </location>
</feature>
<feature type="transmembrane region" description="Helical" evidence="1">
    <location>
        <begin position="27"/>
        <end position="47"/>
    </location>
</feature>
<feature type="transmembrane region" description="Helical" evidence="1">
    <location>
        <begin position="56"/>
        <end position="76"/>
    </location>
</feature>
<feature type="transmembrane region" description="Helical" evidence="1">
    <location>
        <begin position="90"/>
        <end position="110"/>
    </location>
</feature>
<feature type="transmembrane region" description="Helical" evidence="1">
    <location>
        <begin position="119"/>
        <end position="139"/>
    </location>
</feature>
<feature type="transmembrane region" description="Helical" evidence="1">
    <location>
        <begin position="147"/>
        <end position="167"/>
    </location>
</feature>
<feature type="transmembrane region" description="Helical" evidence="1">
    <location>
        <begin position="176"/>
        <end position="196"/>
    </location>
</feature>
<feature type="transmembrane region" description="Helical" evidence="1">
    <location>
        <begin position="206"/>
        <end position="226"/>
    </location>
</feature>
<feature type="transmembrane region" description="Helical" evidence="1">
    <location>
        <begin position="243"/>
        <end position="263"/>
    </location>
</feature>
<feature type="transmembrane region" description="Helical" evidence="1">
    <location>
        <begin position="270"/>
        <end position="290"/>
    </location>
</feature>
<feature type="transmembrane region" description="Helical" evidence="1">
    <location>
        <begin position="294"/>
        <end position="314"/>
    </location>
</feature>
<feature type="domain" description="EamA 1">
    <location>
        <begin position="38"/>
        <end position="163"/>
    </location>
</feature>
<feature type="domain" description="EamA 2">
    <location>
        <begin position="187"/>
        <end position="314"/>
    </location>
</feature>
<sequence>MKKRLSLDRRFLPYIKKAGGVLVKKQMGAYVSLAAAMAIVGSSVVVGKLMVERIPVFLSSGLRFLIASVVLLMLLFCIEKGFPALTKKDVFVLLVQSFTGVFLFSICLLYGVQYTTGTESGILTSTTPMLIGILSFFLLREKIEKKTLIGILLAVCGVMAINLFGAGSQDGTPHALFGNMLIIAAVIGEALFTLMAKLLSPHISALAISTFVSLFGFLFFLPFALFEASSFDYSVPTVLDWSYVLYYALFVTVLAFYLWYSGVTKVPAGVSGIFTSVLPVSAVILSGVILKEPFEFVHFIGIACVIGGIFVTVIKKKQPDAYPAAEEKTL</sequence>
<name>YETK_BACSU</name>
<proteinExistence type="inferred from homology"/>